<gene>
    <name evidence="1" type="primary">rpsD</name>
    <name type="ordered locus">MHP7448_0576</name>
</gene>
<accession>Q4A7F0</accession>
<dbReference type="EMBL" id="AE017244">
    <property type="protein sequence ID" value="AAZ53939.1"/>
    <property type="molecule type" value="Genomic_DNA"/>
</dbReference>
<dbReference type="RefSeq" id="WP_011206424.1">
    <property type="nucleotide sequence ID" value="NC_007332.1"/>
</dbReference>
<dbReference type="SMR" id="Q4A7F0"/>
<dbReference type="GeneID" id="41334874"/>
<dbReference type="KEGG" id="mhp:MHP7448_0576"/>
<dbReference type="HOGENOM" id="CLU_092403_0_1_14"/>
<dbReference type="Proteomes" id="UP000000553">
    <property type="component" value="Chromosome"/>
</dbReference>
<dbReference type="GO" id="GO:0015935">
    <property type="term" value="C:small ribosomal subunit"/>
    <property type="evidence" value="ECO:0007669"/>
    <property type="project" value="InterPro"/>
</dbReference>
<dbReference type="GO" id="GO:0019843">
    <property type="term" value="F:rRNA binding"/>
    <property type="evidence" value="ECO:0007669"/>
    <property type="project" value="UniProtKB-UniRule"/>
</dbReference>
<dbReference type="GO" id="GO:0003735">
    <property type="term" value="F:structural constituent of ribosome"/>
    <property type="evidence" value="ECO:0007669"/>
    <property type="project" value="InterPro"/>
</dbReference>
<dbReference type="GO" id="GO:0042274">
    <property type="term" value="P:ribosomal small subunit biogenesis"/>
    <property type="evidence" value="ECO:0007669"/>
    <property type="project" value="TreeGrafter"/>
</dbReference>
<dbReference type="GO" id="GO:0006412">
    <property type="term" value="P:translation"/>
    <property type="evidence" value="ECO:0007669"/>
    <property type="project" value="UniProtKB-UniRule"/>
</dbReference>
<dbReference type="CDD" id="cd00165">
    <property type="entry name" value="S4"/>
    <property type="match status" value="1"/>
</dbReference>
<dbReference type="FunFam" id="3.10.290.10:FF:000001">
    <property type="entry name" value="30S ribosomal protein S4"/>
    <property type="match status" value="1"/>
</dbReference>
<dbReference type="Gene3D" id="1.10.1050.10">
    <property type="entry name" value="Ribosomal Protein S4 Delta 41, Chain A, domain 1"/>
    <property type="match status" value="1"/>
</dbReference>
<dbReference type="Gene3D" id="3.10.290.10">
    <property type="entry name" value="RNA-binding S4 domain"/>
    <property type="match status" value="1"/>
</dbReference>
<dbReference type="HAMAP" id="MF_01306_B">
    <property type="entry name" value="Ribosomal_uS4_B"/>
    <property type="match status" value="1"/>
</dbReference>
<dbReference type="InterPro" id="IPR022801">
    <property type="entry name" value="Ribosomal_uS4"/>
</dbReference>
<dbReference type="InterPro" id="IPR005709">
    <property type="entry name" value="Ribosomal_uS4_bac-type"/>
</dbReference>
<dbReference type="InterPro" id="IPR018079">
    <property type="entry name" value="Ribosomal_uS4_CS"/>
</dbReference>
<dbReference type="InterPro" id="IPR001912">
    <property type="entry name" value="Ribosomal_uS4_N"/>
</dbReference>
<dbReference type="InterPro" id="IPR002942">
    <property type="entry name" value="S4_RNA-bd"/>
</dbReference>
<dbReference type="InterPro" id="IPR036986">
    <property type="entry name" value="S4_RNA-bd_sf"/>
</dbReference>
<dbReference type="NCBIfam" id="NF003717">
    <property type="entry name" value="PRK05327.1"/>
    <property type="match status" value="1"/>
</dbReference>
<dbReference type="NCBIfam" id="TIGR01017">
    <property type="entry name" value="rpsD_bact"/>
    <property type="match status" value="1"/>
</dbReference>
<dbReference type="PANTHER" id="PTHR11831">
    <property type="entry name" value="30S 40S RIBOSOMAL PROTEIN"/>
    <property type="match status" value="1"/>
</dbReference>
<dbReference type="PANTHER" id="PTHR11831:SF4">
    <property type="entry name" value="SMALL RIBOSOMAL SUBUNIT PROTEIN US4M"/>
    <property type="match status" value="1"/>
</dbReference>
<dbReference type="Pfam" id="PF00163">
    <property type="entry name" value="Ribosomal_S4"/>
    <property type="match status" value="1"/>
</dbReference>
<dbReference type="Pfam" id="PF01479">
    <property type="entry name" value="S4"/>
    <property type="match status" value="1"/>
</dbReference>
<dbReference type="SMART" id="SM01390">
    <property type="entry name" value="Ribosomal_S4"/>
    <property type="match status" value="1"/>
</dbReference>
<dbReference type="SMART" id="SM00363">
    <property type="entry name" value="S4"/>
    <property type="match status" value="1"/>
</dbReference>
<dbReference type="SUPFAM" id="SSF55174">
    <property type="entry name" value="Alpha-L RNA-binding motif"/>
    <property type="match status" value="1"/>
</dbReference>
<dbReference type="PROSITE" id="PS00632">
    <property type="entry name" value="RIBOSOMAL_S4"/>
    <property type="match status" value="1"/>
</dbReference>
<dbReference type="PROSITE" id="PS50889">
    <property type="entry name" value="S4"/>
    <property type="match status" value="1"/>
</dbReference>
<evidence type="ECO:0000255" key="1">
    <source>
        <dbReference type="HAMAP-Rule" id="MF_01306"/>
    </source>
</evidence>
<evidence type="ECO:0000305" key="2"/>
<reference key="1">
    <citation type="journal article" date="2005" name="J. Bacteriol.">
        <title>Swine and poultry pathogens: the complete genome sequences of two strains of Mycoplasma hyopneumoniae and a strain of Mycoplasma synoviae.</title>
        <authorList>
            <person name="Vasconcelos A.T.R."/>
            <person name="Ferreira H.B."/>
            <person name="Bizarro C.V."/>
            <person name="Bonatto S.L."/>
            <person name="Carvalho M.O."/>
            <person name="Pinto P.M."/>
            <person name="Almeida D.F."/>
            <person name="Almeida L.G.P."/>
            <person name="Almeida R."/>
            <person name="Alves-Junior L."/>
            <person name="Assuncao E.N."/>
            <person name="Azevedo V.A.C."/>
            <person name="Bogo M.R."/>
            <person name="Brigido M.M."/>
            <person name="Brocchi M."/>
            <person name="Burity H.A."/>
            <person name="Camargo A.A."/>
            <person name="Camargo S.S."/>
            <person name="Carepo M.S."/>
            <person name="Carraro D.M."/>
            <person name="de Mattos Cascardo J.C."/>
            <person name="Castro L.A."/>
            <person name="Cavalcanti G."/>
            <person name="Chemale G."/>
            <person name="Collevatti R.G."/>
            <person name="Cunha C.W."/>
            <person name="Dallagiovanna B."/>
            <person name="Dambros B.P."/>
            <person name="Dellagostin O.A."/>
            <person name="Falcao C."/>
            <person name="Fantinatti-Garboggini F."/>
            <person name="Felipe M.S.S."/>
            <person name="Fiorentin L."/>
            <person name="Franco G.R."/>
            <person name="Freitas N.S.A."/>
            <person name="Frias D."/>
            <person name="Grangeiro T.B."/>
            <person name="Grisard E.C."/>
            <person name="Guimaraes C.T."/>
            <person name="Hungria M."/>
            <person name="Jardim S.N."/>
            <person name="Krieger M.A."/>
            <person name="Laurino J.P."/>
            <person name="Lima L.F.A."/>
            <person name="Lopes M.I."/>
            <person name="Loreto E.L.S."/>
            <person name="Madeira H.M.F."/>
            <person name="Manfio G.P."/>
            <person name="Maranhao A.Q."/>
            <person name="Martinkovics C.T."/>
            <person name="Medeiros S.R.B."/>
            <person name="Moreira M.A.M."/>
            <person name="Neiva M."/>
            <person name="Ramalho-Neto C.E."/>
            <person name="Nicolas M.F."/>
            <person name="Oliveira S.C."/>
            <person name="Paixao R.F.C."/>
            <person name="Pedrosa F.O."/>
            <person name="Pena S.D.J."/>
            <person name="Pereira M."/>
            <person name="Pereira-Ferrari L."/>
            <person name="Piffer I."/>
            <person name="Pinto L.S."/>
            <person name="Potrich D.P."/>
            <person name="Salim A.C.M."/>
            <person name="Santos F.R."/>
            <person name="Schmitt R."/>
            <person name="Schneider M.P.C."/>
            <person name="Schrank A."/>
            <person name="Schrank I.S."/>
            <person name="Schuck A.F."/>
            <person name="Seuanez H.N."/>
            <person name="Silva D.W."/>
            <person name="Silva R."/>
            <person name="Silva S.C."/>
            <person name="Soares C.M.A."/>
            <person name="Souza K.R.L."/>
            <person name="Souza R.C."/>
            <person name="Staats C.C."/>
            <person name="Steffens M.B.R."/>
            <person name="Teixeira S.M.R."/>
            <person name="Urmenyi T.P."/>
            <person name="Vainstein M.H."/>
            <person name="Zuccherato L.W."/>
            <person name="Simpson A.J.G."/>
            <person name="Zaha A."/>
        </authorList>
    </citation>
    <scope>NUCLEOTIDE SEQUENCE [LARGE SCALE GENOMIC DNA]</scope>
    <source>
        <strain>7448</strain>
    </source>
</reference>
<feature type="chain" id="PRO_0000228901" description="Small ribosomal subunit protein uS4">
    <location>
        <begin position="1"/>
        <end position="205"/>
    </location>
</feature>
<feature type="domain" description="S4 RNA-binding" evidence="1">
    <location>
        <begin position="94"/>
        <end position="154"/>
    </location>
</feature>
<name>RS4_MESH7</name>
<protein>
    <recommendedName>
        <fullName evidence="1">Small ribosomal subunit protein uS4</fullName>
    </recommendedName>
    <alternativeName>
        <fullName evidence="2">30S ribosomal protein S4</fullName>
    </alternativeName>
</protein>
<organism>
    <name type="scientific">Mesomycoplasma hyopneumoniae (strain 7448)</name>
    <name type="common">Mycoplasma hyopneumoniae</name>
    <dbReference type="NCBI Taxonomy" id="262722"/>
    <lineage>
        <taxon>Bacteria</taxon>
        <taxon>Bacillati</taxon>
        <taxon>Mycoplasmatota</taxon>
        <taxon>Mycoplasmoidales</taxon>
        <taxon>Metamycoplasmataceae</taxon>
        <taxon>Mesomycoplasma</taxon>
    </lineage>
</organism>
<comment type="function">
    <text evidence="1">One of the primary rRNA binding proteins, it binds directly to 16S rRNA where it nucleates assembly of the body of the 30S subunit.</text>
</comment>
<comment type="function">
    <text evidence="1">With S5 and S12 plays an important role in translational accuracy.</text>
</comment>
<comment type="subunit">
    <text evidence="1">Part of the 30S ribosomal subunit. Contacts protein S5. The interaction surface between S4 and S5 is involved in control of translational fidelity.</text>
</comment>
<comment type="similarity">
    <text evidence="1">Belongs to the universal ribosomal protein uS4 family.</text>
</comment>
<sequence>MSRYTGSIFRKSRRLGFSILETGKEFAKGKQRRYAPGLHGLRRSKPSDYGVHLREKQKVRFMYGLSEKQFRNTYRKATKKTGIAGTLFLQALESRLDNSVYRAGFAETRRQARQLVNHGHFLVNNKKVDIPSFQLKQGDIFELTTRKDGKIRKNQQILTSLETRTPAAWLEVDKDNFKVVFNRMPERSELNQEIKESLIVEFYSK</sequence>
<proteinExistence type="inferred from homology"/>
<keyword id="KW-0687">Ribonucleoprotein</keyword>
<keyword id="KW-0689">Ribosomal protein</keyword>
<keyword id="KW-0694">RNA-binding</keyword>
<keyword id="KW-0699">rRNA-binding</keyword>